<accession>B0U4X0</accession>
<organism>
    <name type="scientific">Xylella fastidiosa (strain M12)</name>
    <dbReference type="NCBI Taxonomy" id="405440"/>
    <lineage>
        <taxon>Bacteria</taxon>
        <taxon>Pseudomonadati</taxon>
        <taxon>Pseudomonadota</taxon>
        <taxon>Gammaproteobacteria</taxon>
        <taxon>Lysobacterales</taxon>
        <taxon>Lysobacteraceae</taxon>
        <taxon>Xylella</taxon>
    </lineage>
</organism>
<reference key="1">
    <citation type="journal article" date="2010" name="J. Bacteriol.">
        <title>Whole genome sequences of two Xylella fastidiosa strains (M12 and M23) causing almond leaf scorch disease in California.</title>
        <authorList>
            <person name="Chen J."/>
            <person name="Xie G."/>
            <person name="Han S."/>
            <person name="Chertkov O."/>
            <person name="Sims D."/>
            <person name="Civerolo E.L."/>
        </authorList>
    </citation>
    <scope>NUCLEOTIDE SEQUENCE [LARGE SCALE GENOMIC DNA]</scope>
    <source>
        <strain>M12</strain>
    </source>
</reference>
<proteinExistence type="inferred from homology"/>
<evidence type="ECO:0000255" key="1">
    <source>
        <dbReference type="HAMAP-Rule" id="MF_01646"/>
    </source>
</evidence>
<dbReference type="EC" id="2.1.1.107" evidence="1"/>
<dbReference type="EC" id="1.3.1.76" evidence="1"/>
<dbReference type="EC" id="4.99.1.4" evidence="1"/>
<dbReference type="EMBL" id="CP000941">
    <property type="protein sequence ID" value="ACA12887.1"/>
    <property type="molecule type" value="Genomic_DNA"/>
</dbReference>
<dbReference type="SMR" id="B0U4X0"/>
<dbReference type="KEGG" id="xfm:Xfasm12_2018"/>
<dbReference type="HOGENOM" id="CLU_011276_2_0_6"/>
<dbReference type="UniPathway" id="UPA00148">
    <property type="reaction ID" value="UER00211"/>
</dbReference>
<dbReference type="UniPathway" id="UPA00148">
    <property type="reaction ID" value="UER00222"/>
</dbReference>
<dbReference type="UniPathway" id="UPA00262">
    <property type="reaction ID" value="UER00211"/>
</dbReference>
<dbReference type="UniPathway" id="UPA00262">
    <property type="reaction ID" value="UER00222"/>
</dbReference>
<dbReference type="UniPathway" id="UPA00262">
    <property type="reaction ID" value="UER00376"/>
</dbReference>
<dbReference type="GO" id="GO:0051287">
    <property type="term" value="F:NAD binding"/>
    <property type="evidence" value="ECO:0007669"/>
    <property type="project" value="InterPro"/>
</dbReference>
<dbReference type="GO" id="GO:0043115">
    <property type="term" value="F:precorrin-2 dehydrogenase activity"/>
    <property type="evidence" value="ECO:0007669"/>
    <property type="project" value="UniProtKB-UniRule"/>
</dbReference>
<dbReference type="GO" id="GO:0051266">
    <property type="term" value="F:sirohydrochlorin ferrochelatase activity"/>
    <property type="evidence" value="ECO:0007669"/>
    <property type="project" value="UniProtKB-EC"/>
</dbReference>
<dbReference type="GO" id="GO:0004851">
    <property type="term" value="F:uroporphyrin-III C-methyltransferase activity"/>
    <property type="evidence" value="ECO:0007669"/>
    <property type="project" value="UniProtKB-UniRule"/>
</dbReference>
<dbReference type="GO" id="GO:0009236">
    <property type="term" value="P:cobalamin biosynthetic process"/>
    <property type="evidence" value="ECO:0007669"/>
    <property type="project" value="UniProtKB-UniRule"/>
</dbReference>
<dbReference type="GO" id="GO:0032259">
    <property type="term" value="P:methylation"/>
    <property type="evidence" value="ECO:0007669"/>
    <property type="project" value="UniProtKB-KW"/>
</dbReference>
<dbReference type="GO" id="GO:0019354">
    <property type="term" value="P:siroheme biosynthetic process"/>
    <property type="evidence" value="ECO:0007669"/>
    <property type="project" value="UniProtKB-UniRule"/>
</dbReference>
<dbReference type="CDD" id="cd11642">
    <property type="entry name" value="SUMT"/>
    <property type="match status" value="1"/>
</dbReference>
<dbReference type="FunFam" id="3.30.950.10:FF:000001">
    <property type="entry name" value="Siroheme synthase"/>
    <property type="match status" value="1"/>
</dbReference>
<dbReference type="FunFam" id="3.40.1010.10:FF:000001">
    <property type="entry name" value="Siroheme synthase"/>
    <property type="match status" value="1"/>
</dbReference>
<dbReference type="Gene3D" id="3.40.1010.10">
    <property type="entry name" value="Cobalt-precorrin-4 Transmethylase, Domain 1"/>
    <property type="match status" value="1"/>
</dbReference>
<dbReference type="Gene3D" id="3.30.950.10">
    <property type="entry name" value="Methyltransferase, Cobalt-precorrin-4 Transmethylase, Domain 2"/>
    <property type="match status" value="1"/>
</dbReference>
<dbReference type="Gene3D" id="3.40.50.720">
    <property type="entry name" value="NAD(P)-binding Rossmann-like Domain"/>
    <property type="match status" value="1"/>
</dbReference>
<dbReference type="Gene3D" id="1.10.8.210">
    <property type="entry name" value="Sirohaem synthase, dimerisation domain"/>
    <property type="match status" value="1"/>
</dbReference>
<dbReference type="Gene3D" id="3.30.160.110">
    <property type="entry name" value="Siroheme synthase, domain 2"/>
    <property type="match status" value="1"/>
</dbReference>
<dbReference type="HAMAP" id="MF_01646">
    <property type="entry name" value="Siroheme_synth"/>
    <property type="match status" value="1"/>
</dbReference>
<dbReference type="InterPro" id="IPR000878">
    <property type="entry name" value="4pyrrol_Mease"/>
</dbReference>
<dbReference type="InterPro" id="IPR035996">
    <property type="entry name" value="4pyrrol_Methylase_sf"/>
</dbReference>
<dbReference type="InterPro" id="IPR014777">
    <property type="entry name" value="4pyrrole_Mease_sub1"/>
</dbReference>
<dbReference type="InterPro" id="IPR014776">
    <property type="entry name" value="4pyrrole_Mease_sub2"/>
</dbReference>
<dbReference type="InterPro" id="IPR006366">
    <property type="entry name" value="CobA/CysG_C"/>
</dbReference>
<dbReference type="InterPro" id="IPR036291">
    <property type="entry name" value="NAD(P)-bd_dom_sf"/>
</dbReference>
<dbReference type="InterPro" id="IPR050161">
    <property type="entry name" value="Siro_Cobalamin_biosynth"/>
</dbReference>
<dbReference type="InterPro" id="IPR037115">
    <property type="entry name" value="Sirohaem_synt_dimer_dom_sf"/>
</dbReference>
<dbReference type="InterPro" id="IPR012409">
    <property type="entry name" value="Sirohaem_synth"/>
</dbReference>
<dbReference type="InterPro" id="IPR028281">
    <property type="entry name" value="Sirohaem_synthase_central"/>
</dbReference>
<dbReference type="InterPro" id="IPR019478">
    <property type="entry name" value="Sirohaem_synthase_dimer_dom"/>
</dbReference>
<dbReference type="InterPro" id="IPR006367">
    <property type="entry name" value="Sirohaem_synthase_N"/>
</dbReference>
<dbReference type="InterPro" id="IPR003043">
    <property type="entry name" value="Uropor_MeTrfase_CS"/>
</dbReference>
<dbReference type="NCBIfam" id="TIGR01469">
    <property type="entry name" value="cobA_cysG_Cterm"/>
    <property type="match status" value="1"/>
</dbReference>
<dbReference type="NCBIfam" id="TIGR01470">
    <property type="entry name" value="cysG_Nterm"/>
    <property type="match status" value="1"/>
</dbReference>
<dbReference type="NCBIfam" id="NF004790">
    <property type="entry name" value="PRK06136.1"/>
    <property type="match status" value="1"/>
</dbReference>
<dbReference type="NCBIfam" id="NF007922">
    <property type="entry name" value="PRK10637.1"/>
    <property type="match status" value="1"/>
</dbReference>
<dbReference type="PANTHER" id="PTHR45790:SF1">
    <property type="entry name" value="SIROHEME SYNTHASE"/>
    <property type="match status" value="1"/>
</dbReference>
<dbReference type="PANTHER" id="PTHR45790">
    <property type="entry name" value="SIROHEME SYNTHASE-RELATED"/>
    <property type="match status" value="1"/>
</dbReference>
<dbReference type="Pfam" id="PF10414">
    <property type="entry name" value="CysG_dimeriser"/>
    <property type="match status" value="1"/>
</dbReference>
<dbReference type="Pfam" id="PF13241">
    <property type="entry name" value="NAD_binding_7"/>
    <property type="match status" value="1"/>
</dbReference>
<dbReference type="Pfam" id="PF14824">
    <property type="entry name" value="Sirohm_synth_M"/>
    <property type="match status" value="1"/>
</dbReference>
<dbReference type="Pfam" id="PF00590">
    <property type="entry name" value="TP_methylase"/>
    <property type="match status" value="1"/>
</dbReference>
<dbReference type="PIRSF" id="PIRSF036426">
    <property type="entry name" value="Sirohaem_synth"/>
    <property type="match status" value="1"/>
</dbReference>
<dbReference type="SUPFAM" id="SSF51735">
    <property type="entry name" value="NAD(P)-binding Rossmann-fold domains"/>
    <property type="match status" value="1"/>
</dbReference>
<dbReference type="SUPFAM" id="SSF75615">
    <property type="entry name" value="Siroheme synthase middle domains-like"/>
    <property type="match status" value="1"/>
</dbReference>
<dbReference type="SUPFAM" id="SSF53790">
    <property type="entry name" value="Tetrapyrrole methylase"/>
    <property type="match status" value="1"/>
</dbReference>
<dbReference type="PROSITE" id="PS00840">
    <property type="entry name" value="SUMT_2"/>
    <property type="match status" value="1"/>
</dbReference>
<gene>
    <name evidence="1" type="primary">cysG</name>
    <name type="ordered locus">Xfasm12_2018</name>
</gene>
<comment type="function">
    <text evidence="1">Multifunctional enzyme that catalyzes the SAM-dependent methylations of uroporphyrinogen III at position C-2 and C-7 to form precorrin-2 via precorrin-1. Then it catalyzes the NAD-dependent ring dehydrogenation of precorrin-2 to yield sirohydrochlorin. Finally, it catalyzes the ferrochelation of sirohydrochlorin to yield siroheme.</text>
</comment>
<comment type="catalytic activity">
    <reaction evidence="1">
        <text>uroporphyrinogen III + 2 S-adenosyl-L-methionine = precorrin-2 + 2 S-adenosyl-L-homocysteine + H(+)</text>
        <dbReference type="Rhea" id="RHEA:32459"/>
        <dbReference type="ChEBI" id="CHEBI:15378"/>
        <dbReference type="ChEBI" id="CHEBI:57308"/>
        <dbReference type="ChEBI" id="CHEBI:57856"/>
        <dbReference type="ChEBI" id="CHEBI:58827"/>
        <dbReference type="ChEBI" id="CHEBI:59789"/>
        <dbReference type="EC" id="2.1.1.107"/>
    </reaction>
</comment>
<comment type="catalytic activity">
    <reaction evidence="1">
        <text>precorrin-2 + NAD(+) = sirohydrochlorin + NADH + 2 H(+)</text>
        <dbReference type="Rhea" id="RHEA:15613"/>
        <dbReference type="ChEBI" id="CHEBI:15378"/>
        <dbReference type="ChEBI" id="CHEBI:57540"/>
        <dbReference type="ChEBI" id="CHEBI:57945"/>
        <dbReference type="ChEBI" id="CHEBI:58351"/>
        <dbReference type="ChEBI" id="CHEBI:58827"/>
        <dbReference type="EC" id="1.3.1.76"/>
    </reaction>
</comment>
<comment type="catalytic activity">
    <reaction evidence="1">
        <text>siroheme + 2 H(+) = sirohydrochlorin + Fe(2+)</text>
        <dbReference type="Rhea" id="RHEA:24360"/>
        <dbReference type="ChEBI" id="CHEBI:15378"/>
        <dbReference type="ChEBI" id="CHEBI:29033"/>
        <dbReference type="ChEBI" id="CHEBI:58351"/>
        <dbReference type="ChEBI" id="CHEBI:60052"/>
        <dbReference type="EC" id="4.99.1.4"/>
    </reaction>
</comment>
<comment type="pathway">
    <text evidence="1">Cofactor biosynthesis; adenosylcobalamin biosynthesis; precorrin-2 from uroporphyrinogen III: step 1/1.</text>
</comment>
<comment type="pathway">
    <text evidence="1">Cofactor biosynthesis; adenosylcobalamin biosynthesis; sirohydrochlorin from precorrin-2: step 1/1.</text>
</comment>
<comment type="pathway">
    <text evidence="1">Porphyrin-containing compound metabolism; siroheme biosynthesis; precorrin-2 from uroporphyrinogen III: step 1/1.</text>
</comment>
<comment type="pathway">
    <text evidence="1">Porphyrin-containing compound metabolism; siroheme biosynthesis; siroheme from sirohydrochlorin: step 1/1.</text>
</comment>
<comment type="pathway">
    <text evidence="1">Porphyrin-containing compound metabolism; siroheme biosynthesis; sirohydrochlorin from precorrin-2: step 1/1.</text>
</comment>
<comment type="similarity">
    <text evidence="1">In the N-terminal section; belongs to the precorrin-2 dehydrogenase / sirohydrochlorin ferrochelatase family.</text>
</comment>
<comment type="similarity">
    <text evidence="1">In the C-terminal section; belongs to the precorrin methyltransferase family.</text>
</comment>
<keyword id="KW-0169">Cobalamin biosynthesis</keyword>
<keyword id="KW-0456">Lyase</keyword>
<keyword id="KW-0489">Methyltransferase</keyword>
<keyword id="KW-0511">Multifunctional enzyme</keyword>
<keyword id="KW-0520">NAD</keyword>
<keyword id="KW-0560">Oxidoreductase</keyword>
<keyword id="KW-0597">Phosphoprotein</keyword>
<keyword id="KW-0627">Porphyrin biosynthesis</keyword>
<keyword id="KW-0949">S-adenosyl-L-methionine</keyword>
<keyword id="KW-0808">Transferase</keyword>
<feature type="chain" id="PRO_1000186962" description="Siroheme synthase">
    <location>
        <begin position="1"/>
        <end position="476"/>
    </location>
</feature>
<feature type="region of interest" description="Precorrin-2 dehydrogenase /sirohydrochlorin ferrochelatase" evidence="1">
    <location>
        <begin position="1"/>
        <end position="207"/>
    </location>
</feature>
<feature type="region of interest" description="Uroporphyrinogen-III C-methyltransferase" evidence="1">
    <location>
        <begin position="220"/>
        <end position="476"/>
    </location>
</feature>
<feature type="active site" description="Proton acceptor" evidence="1">
    <location>
        <position position="252"/>
    </location>
</feature>
<feature type="active site" description="Proton donor" evidence="1">
    <location>
        <position position="274"/>
    </location>
</feature>
<feature type="binding site" evidence="1">
    <location>
        <begin position="25"/>
        <end position="26"/>
    </location>
    <ligand>
        <name>NAD(+)</name>
        <dbReference type="ChEBI" id="CHEBI:57540"/>
    </ligand>
</feature>
<feature type="binding site" evidence="1">
    <location>
        <begin position="46"/>
        <end position="47"/>
    </location>
    <ligand>
        <name>NAD(+)</name>
        <dbReference type="ChEBI" id="CHEBI:57540"/>
    </ligand>
</feature>
<feature type="binding site" evidence="1">
    <location>
        <begin position="305"/>
        <end position="307"/>
    </location>
    <ligand>
        <name>S-adenosyl-L-methionine</name>
        <dbReference type="ChEBI" id="CHEBI:59789"/>
    </ligand>
</feature>
<feature type="binding site" evidence="1">
    <location>
        <position position="310"/>
    </location>
    <ligand>
        <name>S-adenosyl-L-methionine</name>
        <dbReference type="ChEBI" id="CHEBI:59789"/>
    </ligand>
</feature>
<feature type="binding site" evidence="1">
    <location>
        <begin position="335"/>
        <end position="336"/>
    </location>
    <ligand>
        <name>S-adenosyl-L-methionine</name>
        <dbReference type="ChEBI" id="CHEBI:59789"/>
    </ligand>
</feature>
<feature type="binding site" evidence="1">
    <location>
        <position position="387"/>
    </location>
    <ligand>
        <name>S-adenosyl-L-methionine</name>
        <dbReference type="ChEBI" id="CHEBI:59789"/>
    </ligand>
</feature>
<feature type="binding site" evidence="1">
    <location>
        <position position="416"/>
    </location>
    <ligand>
        <name>S-adenosyl-L-methionine</name>
        <dbReference type="ChEBI" id="CHEBI:59789"/>
    </ligand>
</feature>
<feature type="modified residue" description="Phosphoserine" evidence="1">
    <location>
        <position position="132"/>
    </location>
</feature>
<protein>
    <recommendedName>
        <fullName evidence="1">Siroheme synthase</fullName>
    </recommendedName>
    <domain>
        <recommendedName>
            <fullName evidence="1">Uroporphyrinogen-III C-methyltransferase</fullName>
            <shortName evidence="1">Urogen III methylase</shortName>
            <ecNumber evidence="1">2.1.1.107</ecNumber>
        </recommendedName>
        <alternativeName>
            <fullName evidence="1">SUMT</fullName>
        </alternativeName>
        <alternativeName>
            <fullName evidence="1">Uroporphyrinogen III methylase</fullName>
            <shortName evidence="1">UROM</shortName>
        </alternativeName>
    </domain>
    <domain>
        <recommendedName>
            <fullName evidence="1">Precorrin-2 dehydrogenase</fullName>
            <ecNumber evidence="1">1.3.1.76</ecNumber>
        </recommendedName>
    </domain>
    <domain>
        <recommendedName>
            <fullName evidence="1">Sirohydrochlorin ferrochelatase</fullName>
            <ecNumber evidence="1">4.99.1.4</ecNumber>
        </recommendedName>
    </domain>
</protein>
<sequence length="476" mass="51691">MTANALFPLFANLHDRAVLVVGGGKVAERKTEALLKVGALPIIGAPSLTTSLQRWAETGRITWRQGTFEDSWLQEDIWLVIAATDQPEVNHAAARAAHAQRLFVNVVDDIALSNVQVPAVVERGPLRIAISSGGGAPMVARYLRQQLESLIDDSWGRLTTLFAQRRDTIRARYPNIEARRRFFETQLAGPLQRLLRKQRHAEAEAVLEAALAETPLTESGSVTLVGAGAGDAGLLTLNALRALNEADIILYDRLVSDTVLQMARRDAEQIEVGKSATGHSVRQEDIHTLMLQHAHAGQRVVRLKGGDPFVFGRGGEELEFLRTHGIPYEVIPGITAALACAAYAGIPLTHRDHAQSLCLITAHCQSSLDTLDWAALAQERQTLTFYMGVAGLPTIQQRLCEAGRAETTPFALIENGARAQQRVLTGTLKTLAHTAQTYAVRPPALLILGEVTALAEHLHWFGTAPLSAPCPPARIL</sequence>
<name>CYSG_XYLFM</name>